<name>PURL_PROMM</name>
<proteinExistence type="inferred from homology"/>
<sequence length="794" mass="85076">MRVDYDVAAALRHEGLKPHDYDEICRRLQRAPNRVELGMFGVMWSEHCCYRNSRPLLSSFPTSGHRILVGPGENAGVVDLGDGQSLAFKIESHNHPSALEPFQGAATGVGGILRDIFTMGARPIALLNALRFGPLEDERNVGLMEGVVEGIAHYGNCVGVPTVGGEVAFDSSYSGNPLVNAMALGLMETDEIVCSGAHGVGYPVIYVGSTTGRDGMGGASFASAELTKASLDDRPAVQVGDPFLEKGLIEACLEAFKSGDVVAAQDMGAAGLTCSCSEMAAKGGLGIELDLDRVPARELGMTPYEFLLSESQERMLFVVKPGQEQSLMERFIRWGLQAAIVGCVLEEKVVRVLQKGEVVAEVPANALADDTPIDRHELVSDPPLEIQAKWDWQENLLPVVGLKGINLNSQSHFGSNISWDEILLKLLDDPTIASKRWVYRQYDHQVQANTVSAPGVSDAAVVRLRPQQGKGSVDEVKRGVAAVVDCPNRWVFLDPERGAMAAVAEAARNLSCVGAEPLAVTDNLNFPSPETPTGYWQLALACRGLSKACKTFSTPVTGGNVSLYNETRLADGKIQPIHPTPVVGMVGLVHNLVNVCGQAWLEPGDLIWLLGVPIDTTVAVDPRVSLAGSSYLECIHGLVTGRPPEIDLKLECLVQSFLRNSITEGFVRSAHDLSDGGLAVAVAECCIAANLGAHIELPSSDARLDRLLFAEGGSRILVSVPSTQAVAWQKVLNQAKTTAPGSVFDQYLGVVTADDELLITQAGNRLVQLPLNQLRECFEQAIPRRMGLDLSSSV</sequence>
<protein>
    <recommendedName>
        <fullName evidence="1">Phosphoribosylformylglycinamidine synthase subunit PurL</fullName>
        <shortName evidence="1">FGAM synthase</shortName>
        <ecNumber evidence="1">6.3.5.3</ecNumber>
    </recommendedName>
    <alternativeName>
        <fullName evidence="1">Formylglycinamide ribonucleotide amidotransferase subunit II</fullName>
        <shortName evidence="1">FGAR amidotransferase II</shortName>
        <shortName evidence="1">FGAR-AT II</shortName>
    </alternativeName>
    <alternativeName>
        <fullName evidence="1">Glutamine amidotransferase PurL</fullName>
    </alternativeName>
    <alternativeName>
        <fullName evidence="1">Phosphoribosylformylglycinamidine synthase subunit II</fullName>
    </alternativeName>
</protein>
<evidence type="ECO:0000255" key="1">
    <source>
        <dbReference type="HAMAP-Rule" id="MF_00420"/>
    </source>
</evidence>
<dbReference type="EC" id="6.3.5.3" evidence="1"/>
<dbReference type="EMBL" id="BX548175">
    <property type="protein sequence ID" value="CAE20178.1"/>
    <property type="molecule type" value="Genomic_DNA"/>
</dbReference>
<dbReference type="RefSeq" id="WP_011129382.1">
    <property type="nucleotide sequence ID" value="NC_005071.1"/>
</dbReference>
<dbReference type="SMR" id="Q7V9E5"/>
<dbReference type="KEGG" id="pmt:PMT_0003"/>
<dbReference type="eggNOG" id="COG0046">
    <property type="taxonomic scope" value="Bacteria"/>
</dbReference>
<dbReference type="HOGENOM" id="CLU_003100_0_1_3"/>
<dbReference type="OrthoDB" id="9804441at2"/>
<dbReference type="UniPathway" id="UPA00074">
    <property type="reaction ID" value="UER00128"/>
</dbReference>
<dbReference type="Proteomes" id="UP000001423">
    <property type="component" value="Chromosome"/>
</dbReference>
<dbReference type="GO" id="GO:0005737">
    <property type="term" value="C:cytoplasm"/>
    <property type="evidence" value="ECO:0007669"/>
    <property type="project" value="UniProtKB-SubCell"/>
</dbReference>
<dbReference type="GO" id="GO:0005524">
    <property type="term" value="F:ATP binding"/>
    <property type="evidence" value="ECO:0007669"/>
    <property type="project" value="UniProtKB-UniRule"/>
</dbReference>
<dbReference type="GO" id="GO:0000287">
    <property type="term" value="F:magnesium ion binding"/>
    <property type="evidence" value="ECO:0007669"/>
    <property type="project" value="UniProtKB-UniRule"/>
</dbReference>
<dbReference type="GO" id="GO:0004642">
    <property type="term" value="F:phosphoribosylformylglycinamidine synthase activity"/>
    <property type="evidence" value="ECO:0007669"/>
    <property type="project" value="UniProtKB-UniRule"/>
</dbReference>
<dbReference type="GO" id="GO:0006189">
    <property type="term" value="P:'de novo' IMP biosynthetic process"/>
    <property type="evidence" value="ECO:0007669"/>
    <property type="project" value="UniProtKB-UniRule"/>
</dbReference>
<dbReference type="CDD" id="cd02203">
    <property type="entry name" value="PurL_repeat1"/>
    <property type="match status" value="1"/>
</dbReference>
<dbReference type="CDD" id="cd02204">
    <property type="entry name" value="PurL_repeat2"/>
    <property type="match status" value="1"/>
</dbReference>
<dbReference type="FunFam" id="3.30.1330.10:FF:000004">
    <property type="entry name" value="Phosphoribosylformylglycinamidine synthase subunit PurL"/>
    <property type="match status" value="1"/>
</dbReference>
<dbReference type="Gene3D" id="3.90.650.10">
    <property type="entry name" value="PurM-like C-terminal domain"/>
    <property type="match status" value="2"/>
</dbReference>
<dbReference type="Gene3D" id="3.30.1330.10">
    <property type="entry name" value="PurM-like, N-terminal domain"/>
    <property type="match status" value="2"/>
</dbReference>
<dbReference type="HAMAP" id="MF_00420">
    <property type="entry name" value="PurL_2"/>
    <property type="match status" value="1"/>
</dbReference>
<dbReference type="InterPro" id="IPR010074">
    <property type="entry name" value="PRibForGlyAmidine_synth_PurL"/>
</dbReference>
<dbReference type="InterPro" id="IPR041609">
    <property type="entry name" value="PurL_linker"/>
</dbReference>
<dbReference type="InterPro" id="IPR010918">
    <property type="entry name" value="PurM-like_C_dom"/>
</dbReference>
<dbReference type="InterPro" id="IPR036676">
    <property type="entry name" value="PurM-like_C_sf"/>
</dbReference>
<dbReference type="InterPro" id="IPR016188">
    <property type="entry name" value="PurM-like_N"/>
</dbReference>
<dbReference type="InterPro" id="IPR036921">
    <property type="entry name" value="PurM-like_N_sf"/>
</dbReference>
<dbReference type="NCBIfam" id="TIGR01736">
    <property type="entry name" value="FGAM_synth_II"/>
    <property type="match status" value="1"/>
</dbReference>
<dbReference type="NCBIfam" id="NF002290">
    <property type="entry name" value="PRK01213.1"/>
    <property type="match status" value="1"/>
</dbReference>
<dbReference type="PANTHER" id="PTHR43555">
    <property type="entry name" value="PHOSPHORIBOSYLFORMYLGLYCINAMIDINE SYNTHASE SUBUNIT PURL"/>
    <property type="match status" value="1"/>
</dbReference>
<dbReference type="PANTHER" id="PTHR43555:SF1">
    <property type="entry name" value="PHOSPHORIBOSYLFORMYLGLYCINAMIDINE SYNTHASE SUBUNIT PURL"/>
    <property type="match status" value="1"/>
</dbReference>
<dbReference type="Pfam" id="PF00586">
    <property type="entry name" value="AIRS"/>
    <property type="match status" value="2"/>
</dbReference>
<dbReference type="Pfam" id="PF02769">
    <property type="entry name" value="AIRS_C"/>
    <property type="match status" value="2"/>
</dbReference>
<dbReference type="Pfam" id="PF18072">
    <property type="entry name" value="FGAR-AT_linker"/>
    <property type="match status" value="1"/>
</dbReference>
<dbReference type="PIRSF" id="PIRSF001587">
    <property type="entry name" value="FGAM_synthase_II"/>
    <property type="match status" value="1"/>
</dbReference>
<dbReference type="SUPFAM" id="SSF56042">
    <property type="entry name" value="PurM C-terminal domain-like"/>
    <property type="match status" value="2"/>
</dbReference>
<dbReference type="SUPFAM" id="SSF55326">
    <property type="entry name" value="PurM N-terminal domain-like"/>
    <property type="match status" value="2"/>
</dbReference>
<keyword id="KW-0067">ATP-binding</keyword>
<keyword id="KW-0963">Cytoplasm</keyword>
<keyword id="KW-0436">Ligase</keyword>
<keyword id="KW-0460">Magnesium</keyword>
<keyword id="KW-0479">Metal-binding</keyword>
<keyword id="KW-0547">Nucleotide-binding</keyword>
<keyword id="KW-0658">Purine biosynthesis</keyword>
<keyword id="KW-1185">Reference proteome</keyword>
<gene>
    <name evidence="1" type="primary">purL</name>
    <name type="ordered locus">PMT_0003</name>
</gene>
<feature type="chain" id="PRO_0000100478" description="Phosphoribosylformylglycinamidine synthase subunit PurL">
    <location>
        <begin position="1"/>
        <end position="794"/>
    </location>
</feature>
<feature type="active site" evidence="1">
    <location>
        <position position="47"/>
    </location>
</feature>
<feature type="active site" description="Proton acceptor" evidence="1">
    <location>
        <position position="93"/>
    </location>
</feature>
<feature type="binding site" evidence="1">
    <location>
        <position position="50"/>
    </location>
    <ligand>
        <name>ATP</name>
        <dbReference type="ChEBI" id="CHEBI:30616"/>
    </ligand>
</feature>
<feature type="binding site" evidence="1">
    <location>
        <position position="89"/>
    </location>
    <ligand>
        <name>ATP</name>
        <dbReference type="ChEBI" id="CHEBI:30616"/>
    </ligand>
</feature>
<feature type="binding site" evidence="1">
    <location>
        <position position="91"/>
    </location>
    <ligand>
        <name>Mg(2+)</name>
        <dbReference type="ChEBI" id="CHEBI:18420"/>
        <label>1</label>
    </ligand>
</feature>
<feature type="binding site" evidence="1">
    <location>
        <begin position="92"/>
        <end position="95"/>
    </location>
    <ligand>
        <name>substrate</name>
    </ligand>
</feature>
<feature type="binding site" evidence="1">
    <location>
        <position position="114"/>
    </location>
    <ligand>
        <name>substrate</name>
    </ligand>
</feature>
<feature type="binding site" evidence="1">
    <location>
        <position position="115"/>
    </location>
    <ligand>
        <name>Mg(2+)</name>
        <dbReference type="ChEBI" id="CHEBI:18420"/>
        <label>2</label>
    </ligand>
</feature>
<feature type="binding site" evidence="1">
    <location>
        <position position="238"/>
    </location>
    <ligand>
        <name>substrate</name>
    </ligand>
</feature>
<feature type="binding site" evidence="1">
    <location>
        <position position="266"/>
    </location>
    <ligand>
        <name>Mg(2+)</name>
        <dbReference type="ChEBI" id="CHEBI:18420"/>
        <label>2</label>
    </ligand>
</feature>
<feature type="binding site" evidence="1">
    <location>
        <begin position="310"/>
        <end position="312"/>
    </location>
    <ligand>
        <name>substrate</name>
    </ligand>
</feature>
<feature type="binding site" evidence="1">
    <location>
        <position position="522"/>
    </location>
    <ligand>
        <name>ATP</name>
        <dbReference type="ChEBI" id="CHEBI:30616"/>
    </ligand>
</feature>
<feature type="binding site" evidence="1">
    <location>
        <position position="559"/>
    </location>
    <ligand>
        <name>ATP</name>
        <dbReference type="ChEBI" id="CHEBI:30616"/>
    </ligand>
</feature>
<feature type="binding site" evidence="1">
    <location>
        <position position="560"/>
    </location>
    <ligand>
        <name>Mg(2+)</name>
        <dbReference type="ChEBI" id="CHEBI:18420"/>
        <label>1</label>
    </ligand>
</feature>
<feature type="binding site" evidence="1">
    <location>
        <position position="562"/>
    </location>
    <ligand>
        <name>substrate</name>
    </ligand>
</feature>
<accession>Q7V9E5</accession>
<organism>
    <name type="scientific">Prochlorococcus marinus (strain MIT 9313)</name>
    <dbReference type="NCBI Taxonomy" id="74547"/>
    <lineage>
        <taxon>Bacteria</taxon>
        <taxon>Bacillati</taxon>
        <taxon>Cyanobacteriota</taxon>
        <taxon>Cyanophyceae</taxon>
        <taxon>Synechococcales</taxon>
        <taxon>Prochlorococcaceae</taxon>
        <taxon>Prochlorococcus</taxon>
    </lineage>
</organism>
<reference key="1">
    <citation type="journal article" date="2003" name="Nature">
        <title>Genome divergence in two Prochlorococcus ecotypes reflects oceanic niche differentiation.</title>
        <authorList>
            <person name="Rocap G."/>
            <person name="Larimer F.W."/>
            <person name="Lamerdin J.E."/>
            <person name="Malfatti S."/>
            <person name="Chain P."/>
            <person name="Ahlgren N.A."/>
            <person name="Arellano A."/>
            <person name="Coleman M."/>
            <person name="Hauser L."/>
            <person name="Hess W.R."/>
            <person name="Johnson Z.I."/>
            <person name="Land M.L."/>
            <person name="Lindell D."/>
            <person name="Post A.F."/>
            <person name="Regala W."/>
            <person name="Shah M."/>
            <person name="Shaw S.L."/>
            <person name="Steglich C."/>
            <person name="Sullivan M.B."/>
            <person name="Ting C.S."/>
            <person name="Tolonen A."/>
            <person name="Webb E.A."/>
            <person name="Zinser E.R."/>
            <person name="Chisholm S.W."/>
        </authorList>
    </citation>
    <scope>NUCLEOTIDE SEQUENCE [LARGE SCALE GENOMIC DNA]</scope>
    <source>
        <strain>MIT 9313</strain>
    </source>
</reference>
<comment type="function">
    <text evidence="1">Part of the phosphoribosylformylglycinamidine synthase complex involved in the purines biosynthetic pathway. Catalyzes the ATP-dependent conversion of formylglycinamide ribonucleotide (FGAR) and glutamine to yield formylglycinamidine ribonucleotide (FGAM) and glutamate. The FGAM synthase complex is composed of three subunits. PurQ produces an ammonia molecule by converting glutamine to glutamate. PurL transfers the ammonia molecule to FGAR to form FGAM in an ATP-dependent manner. PurS interacts with PurQ and PurL and is thought to assist in the transfer of the ammonia molecule from PurQ to PurL.</text>
</comment>
<comment type="catalytic activity">
    <reaction evidence="1">
        <text>N(2)-formyl-N(1)-(5-phospho-beta-D-ribosyl)glycinamide + L-glutamine + ATP + H2O = 2-formamido-N(1)-(5-O-phospho-beta-D-ribosyl)acetamidine + L-glutamate + ADP + phosphate + H(+)</text>
        <dbReference type="Rhea" id="RHEA:17129"/>
        <dbReference type="ChEBI" id="CHEBI:15377"/>
        <dbReference type="ChEBI" id="CHEBI:15378"/>
        <dbReference type="ChEBI" id="CHEBI:29985"/>
        <dbReference type="ChEBI" id="CHEBI:30616"/>
        <dbReference type="ChEBI" id="CHEBI:43474"/>
        <dbReference type="ChEBI" id="CHEBI:58359"/>
        <dbReference type="ChEBI" id="CHEBI:147286"/>
        <dbReference type="ChEBI" id="CHEBI:147287"/>
        <dbReference type="ChEBI" id="CHEBI:456216"/>
        <dbReference type="EC" id="6.3.5.3"/>
    </reaction>
</comment>
<comment type="pathway">
    <text evidence="1">Purine metabolism; IMP biosynthesis via de novo pathway; 5-amino-1-(5-phospho-D-ribosyl)imidazole from N(2)-formyl-N(1)-(5-phospho-D-ribosyl)glycinamide: step 1/2.</text>
</comment>
<comment type="subunit">
    <text evidence="1">Monomer. Part of the FGAM synthase complex composed of 1 PurL, 1 PurQ and 2 PurS subunits.</text>
</comment>
<comment type="subcellular location">
    <subcellularLocation>
        <location evidence="1">Cytoplasm</location>
    </subcellularLocation>
</comment>
<comment type="similarity">
    <text evidence="1">Belongs to the FGAMS family.</text>
</comment>